<comment type="function">
    <text evidence="1">Affects the rate of fibrils formation. May have a primary role in collagen fibrillogenesis (By similarity).</text>
</comment>
<comment type="subunit">
    <text evidence="1">Binds to type I and type II collagen.</text>
</comment>
<comment type="subcellular location">
    <subcellularLocation>
        <location>Secreted</location>
        <location>Extracellular space</location>
        <location>Extracellular matrix</location>
    </subcellularLocation>
</comment>
<comment type="PTM">
    <text evidence="1">Binds keratan sulfate chains.</text>
</comment>
<comment type="similarity">
    <text evidence="4">Belongs to the small leucine-rich proteoglycan (SLRP) family. SLRP class II subfamily.</text>
</comment>
<evidence type="ECO:0000250" key="1"/>
<evidence type="ECO:0000250" key="2">
    <source>
        <dbReference type="UniProtKB" id="P13605"/>
    </source>
</evidence>
<evidence type="ECO:0000255" key="3"/>
<evidence type="ECO:0000305" key="4"/>
<name>FMOD_RAT</name>
<accession>P50609</accession>
<feature type="signal peptide" evidence="1">
    <location>
        <begin position="1"/>
        <end position="18"/>
    </location>
</feature>
<feature type="chain" id="PRO_0000032741" description="Fibromodulin">
    <location>
        <begin position="19"/>
        <end position="376"/>
    </location>
</feature>
<feature type="domain" description="LRRNT">
    <location>
        <begin position="67"/>
        <end position="105"/>
    </location>
</feature>
<feature type="repeat" description="LRR 1">
    <location>
        <begin position="106"/>
        <end position="127"/>
    </location>
</feature>
<feature type="repeat" description="LRR 2">
    <location>
        <begin position="130"/>
        <end position="143"/>
    </location>
</feature>
<feature type="repeat" description="LRR 3">
    <location>
        <begin position="156"/>
        <end position="176"/>
    </location>
</feature>
<feature type="repeat" description="LRR 4">
    <location>
        <begin position="177"/>
        <end position="198"/>
    </location>
</feature>
<feature type="repeat" description="LRR 5">
    <location>
        <begin position="201"/>
        <end position="222"/>
    </location>
</feature>
<feature type="repeat" description="LRR 6">
    <location>
        <begin position="224"/>
        <end position="245"/>
    </location>
</feature>
<feature type="repeat" description="LRR 7">
    <location>
        <begin position="246"/>
        <end position="266"/>
    </location>
</feature>
<feature type="repeat" description="LRR 8">
    <location>
        <begin position="269"/>
        <end position="289"/>
    </location>
</feature>
<feature type="repeat" description="LRR 9">
    <location>
        <begin position="294"/>
        <end position="315"/>
    </location>
</feature>
<feature type="repeat" description="LRR 10">
    <location>
        <begin position="316"/>
        <end position="335"/>
    </location>
</feature>
<feature type="repeat" description="LRR 11">
    <location>
        <begin position="344"/>
        <end position="367"/>
    </location>
</feature>
<feature type="modified residue" description="Pyrrolidone carboxylic acid" evidence="2">
    <location>
        <position position="19"/>
    </location>
</feature>
<feature type="modified residue" description="Sulfotyrosine" evidence="1">
    <location>
        <position position="20"/>
    </location>
</feature>
<feature type="modified residue" description="Sulfotyrosine" evidence="1">
    <location>
        <position position="38"/>
    </location>
</feature>
<feature type="modified residue" description="Sulfotyrosine" evidence="1">
    <location>
        <position position="53"/>
    </location>
</feature>
<feature type="modified residue" description="Sulfotyrosine" evidence="1">
    <location>
        <position position="55"/>
    </location>
</feature>
<feature type="modified residue" description="Sulfotyrosine" evidence="1">
    <location>
        <position position="63"/>
    </location>
</feature>
<feature type="modified residue" description="Sulfotyrosine" evidence="1">
    <location>
        <position position="65"/>
    </location>
</feature>
<feature type="glycosylation site" description="N-linked (GlcNAc...) (keratan sulfate) asparagine" evidence="1">
    <location>
        <position position="127"/>
    </location>
</feature>
<feature type="glycosylation site" description="N-linked (GlcNAc...) (keratan sulfate) asparagine" evidence="1">
    <location>
        <position position="166"/>
    </location>
</feature>
<feature type="glycosylation site" description="N-linked (GlcNAc...) (keratan sulfate) asparagine" evidence="1">
    <location>
        <position position="201"/>
    </location>
</feature>
<feature type="glycosylation site" description="N-linked (GlcNAc...) (keratan sulfate) asparagine" evidence="1">
    <location>
        <position position="291"/>
    </location>
</feature>
<feature type="glycosylation site" description="N-linked (GlcNAc...) asparagine" evidence="3">
    <location>
        <position position="341"/>
    </location>
</feature>
<feature type="disulfide bond" evidence="1">
    <location>
        <begin position="334"/>
        <end position="367"/>
    </location>
</feature>
<dbReference type="EMBL" id="X82152">
    <property type="protein sequence ID" value="CAA57648.1"/>
    <property type="molecule type" value="mRNA"/>
</dbReference>
<dbReference type="RefSeq" id="NP_542429.1">
    <property type="nucleotide sequence ID" value="NM_080698.1"/>
</dbReference>
<dbReference type="SMR" id="P50609"/>
<dbReference type="BioGRID" id="249092">
    <property type="interactions" value="1"/>
</dbReference>
<dbReference type="FunCoup" id="P50609">
    <property type="interactions" value="104"/>
</dbReference>
<dbReference type="IntAct" id="P50609">
    <property type="interactions" value="1"/>
</dbReference>
<dbReference type="STRING" id="10116.ENSRNOP00000004382"/>
<dbReference type="GlyCosmos" id="P50609">
    <property type="glycosylation" value="5 sites, No reported glycans"/>
</dbReference>
<dbReference type="GlyGen" id="P50609">
    <property type="glycosylation" value="5 sites"/>
</dbReference>
<dbReference type="PhosphoSitePlus" id="P50609"/>
<dbReference type="PaxDb" id="10116-ENSRNOP00000004382"/>
<dbReference type="GeneID" id="64507"/>
<dbReference type="KEGG" id="rno:64507"/>
<dbReference type="UCSC" id="RGD:619769">
    <property type="organism name" value="rat"/>
</dbReference>
<dbReference type="AGR" id="RGD:619769"/>
<dbReference type="CTD" id="2331"/>
<dbReference type="RGD" id="619769">
    <property type="gene designation" value="Fmod"/>
</dbReference>
<dbReference type="eggNOG" id="KOG0619">
    <property type="taxonomic scope" value="Eukaryota"/>
</dbReference>
<dbReference type="InParanoid" id="P50609"/>
<dbReference type="OrthoDB" id="51557at9989"/>
<dbReference type="PhylomeDB" id="P50609"/>
<dbReference type="Reactome" id="R-RNO-2022854">
    <property type="pathway name" value="Keratan sulfate biosynthesis"/>
</dbReference>
<dbReference type="Reactome" id="R-RNO-2022857">
    <property type="pathway name" value="Keratan sulfate degradation"/>
</dbReference>
<dbReference type="PRO" id="PR:P50609"/>
<dbReference type="Proteomes" id="UP000002494">
    <property type="component" value="Unplaced"/>
</dbReference>
<dbReference type="GO" id="GO:0005576">
    <property type="term" value="C:extracellular region"/>
    <property type="evidence" value="ECO:0000314"/>
    <property type="project" value="RGD"/>
</dbReference>
<dbReference type="GO" id="GO:0005615">
    <property type="term" value="C:extracellular space"/>
    <property type="evidence" value="ECO:0000318"/>
    <property type="project" value="GO_Central"/>
</dbReference>
<dbReference type="GO" id="GO:0043588">
    <property type="term" value="P:skin development"/>
    <property type="evidence" value="ECO:0000270"/>
    <property type="project" value="RGD"/>
</dbReference>
<dbReference type="FunFam" id="3.80.10.10:FF:000460">
    <property type="entry name" value="Fibromodulin"/>
    <property type="match status" value="1"/>
</dbReference>
<dbReference type="FunFam" id="3.80.10.10:FF:000390">
    <property type="entry name" value="fibromodulin"/>
    <property type="match status" value="1"/>
</dbReference>
<dbReference type="Gene3D" id="3.80.10.10">
    <property type="entry name" value="Ribonuclease Inhibitor"/>
    <property type="match status" value="2"/>
</dbReference>
<dbReference type="InterPro" id="IPR001611">
    <property type="entry name" value="Leu-rich_rpt"/>
</dbReference>
<dbReference type="InterPro" id="IPR003591">
    <property type="entry name" value="Leu-rich_rpt_typical-subtyp"/>
</dbReference>
<dbReference type="InterPro" id="IPR032675">
    <property type="entry name" value="LRR_dom_sf"/>
</dbReference>
<dbReference type="InterPro" id="IPR000372">
    <property type="entry name" value="LRRNT"/>
</dbReference>
<dbReference type="InterPro" id="IPR050333">
    <property type="entry name" value="SLRP"/>
</dbReference>
<dbReference type="PANTHER" id="PTHR45712">
    <property type="entry name" value="AGAP008170-PA"/>
    <property type="match status" value="1"/>
</dbReference>
<dbReference type="PANTHER" id="PTHR45712:SF4">
    <property type="entry name" value="FIBROMODULIN"/>
    <property type="match status" value="1"/>
</dbReference>
<dbReference type="Pfam" id="PF00560">
    <property type="entry name" value="LRR_1"/>
    <property type="match status" value="1"/>
</dbReference>
<dbReference type="Pfam" id="PF13855">
    <property type="entry name" value="LRR_8"/>
    <property type="match status" value="3"/>
</dbReference>
<dbReference type="Pfam" id="PF01462">
    <property type="entry name" value="LRRNT"/>
    <property type="match status" value="1"/>
</dbReference>
<dbReference type="SMART" id="SM00364">
    <property type="entry name" value="LRR_BAC"/>
    <property type="match status" value="5"/>
</dbReference>
<dbReference type="SMART" id="SM00369">
    <property type="entry name" value="LRR_TYP"/>
    <property type="match status" value="8"/>
</dbReference>
<dbReference type="SMART" id="SM00013">
    <property type="entry name" value="LRRNT"/>
    <property type="match status" value="1"/>
</dbReference>
<dbReference type="SUPFAM" id="SSF52058">
    <property type="entry name" value="L domain-like"/>
    <property type="match status" value="1"/>
</dbReference>
<dbReference type="PROSITE" id="PS51450">
    <property type="entry name" value="LRR"/>
    <property type="match status" value="9"/>
</dbReference>
<keyword id="KW-1015">Disulfide bond</keyword>
<keyword id="KW-0272">Extracellular matrix</keyword>
<keyword id="KW-0325">Glycoprotein</keyword>
<keyword id="KW-0433">Leucine-rich repeat</keyword>
<keyword id="KW-0654">Proteoglycan</keyword>
<keyword id="KW-0873">Pyrrolidone carboxylic acid</keyword>
<keyword id="KW-1185">Reference proteome</keyword>
<keyword id="KW-0677">Repeat</keyword>
<keyword id="KW-0964">Secreted</keyword>
<keyword id="KW-0732">Signal</keyword>
<keyword id="KW-0765">Sulfation</keyword>
<gene>
    <name type="primary">Fmod</name>
</gene>
<proteinExistence type="evidence at transcript level"/>
<protein>
    <recommendedName>
        <fullName>Fibromodulin</fullName>
        <shortName>FM</shortName>
    </recommendedName>
    <alternativeName>
        <fullName>Collagen-binding 59 kDa protein</fullName>
    </alternativeName>
    <alternativeName>
        <fullName>Keratan sulfate proteoglycan fibromodulin</fullName>
        <shortName>KSPG fibromodulin</shortName>
    </alternativeName>
</protein>
<organism>
    <name type="scientific">Rattus norvegicus</name>
    <name type="common">Rat</name>
    <dbReference type="NCBI Taxonomy" id="10116"/>
    <lineage>
        <taxon>Eukaryota</taxon>
        <taxon>Metazoa</taxon>
        <taxon>Chordata</taxon>
        <taxon>Craniata</taxon>
        <taxon>Vertebrata</taxon>
        <taxon>Euteleostomi</taxon>
        <taxon>Mammalia</taxon>
        <taxon>Eutheria</taxon>
        <taxon>Euarchontoglires</taxon>
        <taxon>Glires</taxon>
        <taxon>Rodentia</taxon>
        <taxon>Myomorpha</taxon>
        <taxon>Muroidea</taxon>
        <taxon>Muridae</taxon>
        <taxon>Murinae</taxon>
        <taxon>Rattus</taxon>
    </lineage>
</organism>
<sequence length="376" mass="43219">MQWASILLLRGLCSLSQGQYEEDSHWWLQYLRNQQSTYYDPYDTYPYETSDPYPYEVEEGPAYAYGAPPPPEPRDCPQECDCPPNFPTAMYCDNRNLKYLPFVPSRMKYVYFQNNQIAAIQEGVFDNATGLLWIALHGNQITSDKIGRKVFSKLRHLERLYLDHNNLTRMPGPLPRSLRELHLDHNQISRVPNNALEGLENLTALYLHHNEIQEVGSSMRGLRSLILLDLSYNHLRRVPDGLPSALEQLYLEHNNVYTVPDSYFRGSPKLLYVRLSHNSLTNNGLATNTFNSSSLLELDLSYNQLQKIPPVNTNLENLYLQGNRINEFSISSFCTVVDVMNFSKLQVLRLDGNEIKRSAMPVDAPLCLRLASLIEI</sequence>
<reference key="1">
    <citation type="submission" date="1994-12" db="EMBL/GenBank/DDBJ databases">
        <authorList>
            <person name="Krull N."/>
        </authorList>
    </citation>
    <scope>NUCLEOTIDE SEQUENCE [MRNA]</scope>
    <source>
        <strain>Sprague-Dawley</strain>
    </source>
</reference>